<organism>
    <name type="scientific">Halalkalibacterium halodurans (strain ATCC BAA-125 / DSM 18197 / FERM 7344 / JCM 9153 / C-125)</name>
    <name type="common">Bacillus halodurans</name>
    <dbReference type="NCBI Taxonomy" id="272558"/>
    <lineage>
        <taxon>Bacteria</taxon>
        <taxon>Bacillati</taxon>
        <taxon>Bacillota</taxon>
        <taxon>Bacilli</taxon>
        <taxon>Bacillales</taxon>
        <taxon>Bacillaceae</taxon>
        <taxon>Halalkalibacterium (ex Joshi et al. 2022)</taxon>
    </lineage>
</organism>
<keyword id="KW-1185">Reference proteome</keyword>
<keyword id="KW-0687">Ribonucleoprotein</keyword>
<keyword id="KW-0689">Ribosomal protein</keyword>
<sequence>MAQVQYYGTGRRKHSVARVRLVPGDGNIVINGRSLDEYFGLETLKLIVKQPLVETGTEGQYDVRVNVDGGGFTGQAGAIRHGIARALLQVDPEYRPSLKSAGFLTRDARMKERKKYGLKAARRAPQFSKR</sequence>
<gene>
    <name evidence="1" type="primary">rpsI</name>
    <name type="ordered locus">BH0169</name>
</gene>
<name>RS9_HALH5</name>
<accession>Q9KGD4</accession>
<feature type="chain" id="PRO_0000111324" description="Small ribosomal subunit protein uS9">
    <location>
        <begin position="1"/>
        <end position="130"/>
    </location>
</feature>
<evidence type="ECO:0000255" key="1">
    <source>
        <dbReference type="HAMAP-Rule" id="MF_00532"/>
    </source>
</evidence>
<evidence type="ECO:0000305" key="2"/>
<proteinExistence type="inferred from homology"/>
<dbReference type="EMBL" id="BA000004">
    <property type="protein sequence ID" value="BAB03888.1"/>
    <property type="molecule type" value="Genomic_DNA"/>
</dbReference>
<dbReference type="PIR" id="A83671">
    <property type="entry name" value="A83671"/>
</dbReference>
<dbReference type="RefSeq" id="WP_010896351.1">
    <property type="nucleotide sequence ID" value="NC_002570.2"/>
</dbReference>
<dbReference type="SMR" id="Q9KGD4"/>
<dbReference type="STRING" id="272558.gene:10726009"/>
<dbReference type="GeneID" id="87595710"/>
<dbReference type="KEGG" id="bha:BH0169"/>
<dbReference type="eggNOG" id="COG0103">
    <property type="taxonomic scope" value="Bacteria"/>
</dbReference>
<dbReference type="HOGENOM" id="CLU_046483_2_1_9"/>
<dbReference type="OrthoDB" id="9803965at2"/>
<dbReference type="Proteomes" id="UP000001258">
    <property type="component" value="Chromosome"/>
</dbReference>
<dbReference type="GO" id="GO:0022627">
    <property type="term" value="C:cytosolic small ribosomal subunit"/>
    <property type="evidence" value="ECO:0007669"/>
    <property type="project" value="TreeGrafter"/>
</dbReference>
<dbReference type="GO" id="GO:0003723">
    <property type="term" value="F:RNA binding"/>
    <property type="evidence" value="ECO:0007669"/>
    <property type="project" value="TreeGrafter"/>
</dbReference>
<dbReference type="GO" id="GO:0003735">
    <property type="term" value="F:structural constituent of ribosome"/>
    <property type="evidence" value="ECO:0007669"/>
    <property type="project" value="InterPro"/>
</dbReference>
<dbReference type="GO" id="GO:0006412">
    <property type="term" value="P:translation"/>
    <property type="evidence" value="ECO:0007669"/>
    <property type="project" value="UniProtKB-UniRule"/>
</dbReference>
<dbReference type="FunFam" id="3.30.230.10:FF:000001">
    <property type="entry name" value="30S ribosomal protein S9"/>
    <property type="match status" value="1"/>
</dbReference>
<dbReference type="Gene3D" id="3.30.230.10">
    <property type="match status" value="1"/>
</dbReference>
<dbReference type="HAMAP" id="MF_00532_B">
    <property type="entry name" value="Ribosomal_uS9_B"/>
    <property type="match status" value="1"/>
</dbReference>
<dbReference type="InterPro" id="IPR020568">
    <property type="entry name" value="Ribosomal_Su5_D2-typ_SF"/>
</dbReference>
<dbReference type="InterPro" id="IPR000754">
    <property type="entry name" value="Ribosomal_uS9"/>
</dbReference>
<dbReference type="InterPro" id="IPR023035">
    <property type="entry name" value="Ribosomal_uS9_bac/plastid"/>
</dbReference>
<dbReference type="InterPro" id="IPR020574">
    <property type="entry name" value="Ribosomal_uS9_CS"/>
</dbReference>
<dbReference type="InterPro" id="IPR014721">
    <property type="entry name" value="Ribsml_uS5_D2-typ_fold_subgr"/>
</dbReference>
<dbReference type="NCBIfam" id="NF001099">
    <property type="entry name" value="PRK00132.1"/>
    <property type="match status" value="1"/>
</dbReference>
<dbReference type="PANTHER" id="PTHR21569">
    <property type="entry name" value="RIBOSOMAL PROTEIN S9"/>
    <property type="match status" value="1"/>
</dbReference>
<dbReference type="PANTHER" id="PTHR21569:SF1">
    <property type="entry name" value="SMALL RIBOSOMAL SUBUNIT PROTEIN US9M"/>
    <property type="match status" value="1"/>
</dbReference>
<dbReference type="Pfam" id="PF00380">
    <property type="entry name" value="Ribosomal_S9"/>
    <property type="match status" value="1"/>
</dbReference>
<dbReference type="SUPFAM" id="SSF54211">
    <property type="entry name" value="Ribosomal protein S5 domain 2-like"/>
    <property type="match status" value="1"/>
</dbReference>
<dbReference type="PROSITE" id="PS00360">
    <property type="entry name" value="RIBOSOMAL_S9"/>
    <property type="match status" value="1"/>
</dbReference>
<reference key="1">
    <citation type="journal article" date="2000" name="Nucleic Acids Res.">
        <title>Complete genome sequence of the alkaliphilic bacterium Bacillus halodurans and genomic sequence comparison with Bacillus subtilis.</title>
        <authorList>
            <person name="Takami H."/>
            <person name="Nakasone K."/>
            <person name="Takaki Y."/>
            <person name="Maeno G."/>
            <person name="Sasaki R."/>
            <person name="Masui N."/>
            <person name="Fuji F."/>
            <person name="Hirama C."/>
            <person name="Nakamura Y."/>
            <person name="Ogasawara N."/>
            <person name="Kuhara S."/>
            <person name="Horikoshi K."/>
        </authorList>
    </citation>
    <scope>NUCLEOTIDE SEQUENCE [LARGE SCALE GENOMIC DNA]</scope>
    <source>
        <strain>ATCC BAA-125 / DSM 18197 / FERM 7344 / JCM 9153 / C-125</strain>
    </source>
</reference>
<protein>
    <recommendedName>
        <fullName evidence="1">Small ribosomal subunit protein uS9</fullName>
    </recommendedName>
    <alternativeName>
        <fullName evidence="2">30S ribosomal protein S9</fullName>
    </alternativeName>
</protein>
<comment type="similarity">
    <text evidence="1">Belongs to the universal ribosomal protein uS9 family.</text>
</comment>